<gene>
    <name type="primary">BTN1</name>
    <name type="ordered locus">CNBF4250</name>
</gene>
<accession>P0CM43</accession>
<accession>Q55QB2</accession>
<accession>Q5KFV4</accession>
<name>BTN1_CRYNB</name>
<sequence length="517" mass="56759">MDKDNQALDELPMMTGSKHANKRLFAAFMIFGLLNNVLYVIILSAALDLVSADTPKGVVALFNIFPALITKVVWPLLSNGKIRYTRRVGFCTICSWFGIITIALSSSLSPRLLGISLASLSSGMGELTFLQLTTTLPTEATSKTALGAWSSGTGFAGVAGAGIWWLLRGLGVKGGLGLSSFLPLFFPITYKYILPPFSHLEASSDSSPYQRLPTSSSLSNNNNFRPPAILISVPSSEYVPQHTPLLSSGFIDRDRDRNRDGEELTDGDKRLMGMRASRLTTQEKMKLLRPLVVRYMLPLCAVYVEEYVINSGVAPTLVFPLPTYGLWSWLFKSPRDYYPFWSLTYQTFVFLSRSSLSLGLPPIPKRLLPLPAIIQFLVLSLLFLQAKTFFFSSPAYTPPADGDGGVDRSITIVFLLICLEGLCGGSGYVNTFYHVGREGSSVSENYDADGENEMGGDRRTLNVTEMEKKAMEREFRIGAVGAADSTGILFASLISMPLEIALCRSQVDQGRTMCREL</sequence>
<organism>
    <name type="scientific">Cryptococcus neoformans var. neoformans serotype D (strain B-3501A)</name>
    <name type="common">Filobasidiella neoformans</name>
    <dbReference type="NCBI Taxonomy" id="283643"/>
    <lineage>
        <taxon>Eukaryota</taxon>
        <taxon>Fungi</taxon>
        <taxon>Dikarya</taxon>
        <taxon>Basidiomycota</taxon>
        <taxon>Agaricomycotina</taxon>
        <taxon>Tremellomycetes</taxon>
        <taxon>Tremellales</taxon>
        <taxon>Cryptococcaceae</taxon>
        <taxon>Cryptococcus</taxon>
        <taxon>Cryptococcus neoformans species complex</taxon>
    </lineage>
</organism>
<evidence type="ECO:0000250" key="1"/>
<evidence type="ECO:0000255" key="2"/>
<evidence type="ECO:0000305" key="3"/>
<comment type="function">
    <text evidence="1">Involved in vacuolar transport and vacuole pH homeostasis. Also required for cytokinesis (By similarity).</text>
</comment>
<comment type="subcellular location">
    <subcellularLocation>
        <location evidence="1">Vacuole membrane</location>
        <topology evidence="1">Multi-pass membrane protein</topology>
    </subcellularLocation>
</comment>
<comment type="similarity">
    <text evidence="3">Belongs to the battenin family.</text>
</comment>
<reference key="1">
    <citation type="journal article" date="2005" name="Science">
        <title>The genome of the basidiomycetous yeast and human pathogen Cryptococcus neoformans.</title>
        <authorList>
            <person name="Loftus B.J."/>
            <person name="Fung E."/>
            <person name="Roncaglia P."/>
            <person name="Rowley D."/>
            <person name="Amedeo P."/>
            <person name="Bruno D."/>
            <person name="Vamathevan J."/>
            <person name="Miranda M."/>
            <person name="Anderson I.J."/>
            <person name="Fraser J.A."/>
            <person name="Allen J.E."/>
            <person name="Bosdet I.E."/>
            <person name="Brent M.R."/>
            <person name="Chiu R."/>
            <person name="Doering T.L."/>
            <person name="Donlin M.J."/>
            <person name="D'Souza C.A."/>
            <person name="Fox D.S."/>
            <person name="Grinberg V."/>
            <person name="Fu J."/>
            <person name="Fukushima M."/>
            <person name="Haas B.J."/>
            <person name="Huang J.C."/>
            <person name="Janbon G."/>
            <person name="Jones S.J.M."/>
            <person name="Koo H.L."/>
            <person name="Krzywinski M.I."/>
            <person name="Kwon-Chung K.J."/>
            <person name="Lengeler K.B."/>
            <person name="Maiti R."/>
            <person name="Marra M.A."/>
            <person name="Marra R.E."/>
            <person name="Mathewson C.A."/>
            <person name="Mitchell T.G."/>
            <person name="Pertea M."/>
            <person name="Riggs F.R."/>
            <person name="Salzberg S.L."/>
            <person name="Schein J.E."/>
            <person name="Shvartsbeyn A."/>
            <person name="Shin H."/>
            <person name="Shumway M."/>
            <person name="Specht C.A."/>
            <person name="Suh B.B."/>
            <person name="Tenney A."/>
            <person name="Utterback T.R."/>
            <person name="Wickes B.L."/>
            <person name="Wortman J.R."/>
            <person name="Wye N.H."/>
            <person name="Kronstad J.W."/>
            <person name="Lodge J.K."/>
            <person name="Heitman J."/>
            <person name="Davis R.W."/>
            <person name="Fraser C.M."/>
            <person name="Hyman R.W."/>
        </authorList>
    </citation>
    <scope>NUCLEOTIDE SEQUENCE [LARGE SCALE GENOMIC DNA]</scope>
    <source>
        <strain>B-3501A</strain>
    </source>
</reference>
<proteinExistence type="inferred from homology"/>
<keyword id="KW-0029">Amino-acid transport</keyword>
<keyword id="KW-0472">Membrane</keyword>
<keyword id="KW-0812">Transmembrane</keyword>
<keyword id="KW-1133">Transmembrane helix</keyword>
<keyword id="KW-0813">Transport</keyword>
<keyword id="KW-0926">Vacuole</keyword>
<protein>
    <recommendedName>
        <fullName>Protein BTN1</fullName>
    </recommendedName>
</protein>
<dbReference type="EMBL" id="AAEY01000032">
    <property type="protein sequence ID" value="EAL20099.1"/>
    <property type="molecule type" value="Genomic_DNA"/>
</dbReference>
<dbReference type="RefSeq" id="XP_774746.1">
    <property type="nucleotide sequence ID" value="XM_769653.1"/>
</dbReference>
<dbReference type="GeneID" id="4936977"/>
<dbReference type="KEGG" id="cnb:CNBF4250"/>
<dbReference type="VEuPathDB" id="FungiDB:CNBF4250"/>
<dbReference type="HOGENOM" id="CLU_029663_3_1_1"/>
<dbReference type="OrthoDB" id="8504at5206"/>
<dbReference type="GO" id="GO:0032153">
    <property type="term" value="C:cell division site"/>
    <property type="evidence" value="ECO:0007669"/>
    <property type="project" value="EnsemblFungi"/>
</dbReference>
<dbReference type="GO" id="GO:0051286">
    <property type="term" value="C:cell tip"/>
    <property type="evidence" value="ECO:0007669"/>
    <property type="project" value="EnsemblFungi"/>
</dbReference>
<dbReference type="GO" id="GO:0000329">
    <property type="term" value="C:fungal-type vacuole membrane"/>
    <property type="evidence" value="ECO:0007669"/>
    <property type="project" value="EnsemblFungi"/>
</dbReference>
<dbReference type="GO" id="GO:0006865">
    <property type="term" value="P:amino acid transport"/>
    <property type="evidence" value="ECO:0007669"/>
    <property type="project" value="UniProtKB-KW"/>
</dbReference>
<dbReference type="GO" id="GO:0051453">
    <property type="term" value="P:regulation of intracellular pH"/>
    <property type="evidence" value="ECO:0007669"/>
    <property type="project" value="TreeGrafter"/>
</dbReference>
<dbReference type="InterPro" id="IPR003492">
    <property type="entry name" value="Battenin_disease_Cln3"/>
</dbReference>
<dbReference type="InterPro" id="IPR036259">
    <property type="entry name" value="MFS_trans_sf"/>
</dbReference>
<dbReference type="PANTHER" id="PTHR10981">
    <property type="entry name" value="BATTENIN"/>
    <property type="match status" value="1"/>
</dbReference>
<dbReference type="PANTHER" id="PTHR10981:SF0">
    <property type="entry name" value="BATTENIN"/>
    <property type="match status" value="1"/>
</dbReference>
<dbReference type="Pfam" id="PF02487">
    <property type="entry name" value="CLN3"/>
    <property type="match status" value="1"/>
</dbReference>
<dbReference type="PRINTS" id="PR01315">
    <property type="entry name" value="BATTENIN"/>
</dbReference>
<dbReference type="SUPFAM" id="SSF103473">
    <property type="entry name" value="MFS general substrate transporter"/>
    <property type="match status" value="1"/>
</dbReference>
<feature type="chain" id="PRO_0000410023" description="Protein BTN1">
    <location>
        <begin position="1"/>
        <end position="517"/>
    </location>
</feature>
<feature type="transmembrane region" description="Helical" evidence="2">
    <location>
        <begin position="24"/>
        <end position="44"/>
    </location>
</feature>
<feature type="transmembrane region" description="Helical" evidence="2">
    <location>
        <begin position="57"/>
        <end position="77"/>
    </location>
</feature>
<feature type="transmembrane region" description="Helical" evidence="2">
    <location>
        <begin position="88"/>
        <end position="108"/>
    </location>
</feature>
<feature type="transmembrane region" description="Helical" evidence="2">
    <location>
        <begin position="112"/>
        <end position="132"/>
    </location>
</feature>
<feature type="transmembrane region" description="Helical" evidence="2">
    <location>
        <begin position="146"/>
        <end position="166"/>
    </location>
</feature>
<feature type="transmembrane region" description="Helical" evidence="2">
    <location>
        <begin position="169"/>
        <end position="189"/>
    </location>
</feature>
<feature type="transmembrane region" description="Helical" evidence="2">
    <location>
        <begin position="371"/>
        <end position="391"/>
    </location>
</feature>
<feature type="transmembrane region" description="Helical" evidence="2">
    <location>
        <begin position="409"/>
        <end position="429"/>
    </location>
</feature>